<accession>Q8YYB4</accession>
<feature type="chain" id="PRO_0000353697" description="Cytochrome c biogenesis protein CcsA">
    <location>
        <begin position="1"/>
        <end position="351"/>
    </location>
</feature>
<feature type="transmembrane region" description="Helical" evidence="2">
    <location>
        <begin position="17"/>
        <end position="37"/>
    </location>
</feature>
<feature type="transmembrane region" description="Helical" evidence="2">
    <location>
        <begin position="38"/>
        <end position="58"/>
    </location>
</feature>
<feature type="transmembrane region" description="Helical" evidence="2">
    <location>
        <begin position="68"/>
        <end position="88"/>
    </location>
</feature>
<feature type="transmembrane region" description="Helical" evidence="2">
    <location>
        <begin position="97"/>
        <end position="117"/>
    </location>
</feature>
<feature type="transmembrane region" description="Helical" evidence="2">
    <location>
        <begin position="143"/>
        <end position="163"/>
    </location>
</feature>
<feature type="transmembrane region" description="Helical" evidence="2">
    <location>
        <begin position="259"/>
        <end position="279"/>
    </location>
</feature>
<feature type="transmembrane region" description="Helical" evidence="2">
    <location>
        <begin position="286"/>
        <end position="306"/>
    </location>
</feature>
<feature type="transmembrane region" description="Helical" evidence="2">
    <location>
        <begin position="320"/>
        <end position="340"/>
    </location>
</feature>
<sequence length="351" mass="38159">MNLVSLQNWLDNASFAVLFLTMLLYWIGAAFPGLPAINALGTAGMAIANLSIATLLGARWIEAGYFPLSNLYESLFFLSWGITTVHLIAENSSRSRLVGVFTTPVAMGIVAFATLTLPSDMQVSEPLVPALKSNWLMMHVSVMMLSYSALMVGSLLAIAFLVITRGNNIQLQGSSVGNGGYRTNGYRLMKAGELVSQPATPPVENNGFTRLESQNNGNSNTAVLNLATTPQTPTLTSTETLSPQRLSLAETLDNISYRIIGLGFPLLTIGIIAGAVWANEAWGSYWSWDPKETWALITWLVFAAYLHARITRGWQGRRPAILAASGFVVVWICYLGVNLLGKGLHSYGWFF</sequence>
<name>CCSA_NOSS1</name>
<protein>
    <recommendedName>
        <fullName evidence="2">Cytochrome c biogenesis protein CcsA</fullName>
    </recommendedName>
</protein>
<keyword id="KW-0201">Cytochrome c-type biogenesis</keyword>
<keyword id="KW-0472">Membrane</keyword>
<keyword id="KW-1185">Reference proteome</keyword>
<keyword id="KW-0793">Thylakoid</keyword>
<keyword id="KW-0812">Transmembrane</keyword>
<keyword id="KW-1133">Transmembrane helix</keyword>
<comment type="function">
    <text evidence="2">Required during biogenesis of c-type cytochromes (cytochrome c6 and cytochrome f) at the step of heme attachment.</text>
</comment>
<comment type="subunit">
    <text evidence="1">May interact with ccs1.</text>
</comment>
<comment type="subcellular location">
    <subcellularLocation>
        <location evidence="2">Cellular thylakoid membrane</location>
        <topology evidence="2">Multi-pass membrane protein</topology>
    </subcellularLocation>
</comment>
<comment type="similarity">
    <text evidence="2">Belongs to the CcmF/CycK/Ccl1/NrfE/CcsA family.</text>
</comment>
<gene>
    <name evidence="2" type="primary">ccsA</name>
    <name type="ordered locus">all0936</name>
</gene>
<reference key="1">
    <citation type="journal article" date="2001" name="DNA Res.">
        <title>Complete genomic sequence of the filamentous nitrogen-fixing cyanobacterium Anabaena sp. strain PCC 7120.</title>
        <authorList>
            <person name="Kaneko T."/>
            <person name="Nakamura Y."/>
            <person name="Wolk C.P."/>
            <person name="Kuritz T."/>
            <person name="Sasamoto S."/>
            <person name="Watanabe A."/>
            <person name="Iriguchi M."/>
            <person name="Ishikawa A."/>
            <person name="Kawashima K."/>
            <person name="Kimura T."/>
            <person name="Kishida Y."/>
            <person name="Kohara M."/>
            <person name="Matsumoto M."/>
            <person name="Matsuno A."/>
            <person name="Muraki A."/>
            <person name="Nakazaki N."/>
            <person name="Shimpo S."/>
            <person name="Sugimoto M."/>
            <person name="Takazawa M."/>
            <person name="Yamada M."/>
            <person name="Yasuda M."/>
            <person name="Tabata S."/>
        </authorList>
    </citation>
    <scope>NUCLEOTIDE SEQUENCE [LARGE SCALE GENOMIC DNA]</scope>
    <source>
        <strain>PCC 7120 / SAG 25.82 / UTEX 2576</strain>
    </source>
</reference>
<evidence type="ECO:0000250" key="1"/>
<evidence type="ECO:0000255" key="2">
    <source>
        <dbReference type="HAMAP-Rule" id="MF_01391"/>
    </source>
</evidence>
<organism>
    <name type="scientific">Nostoc sp. (strain PCC 7120 / SAG 25.82 / UTEX 2576)</name>
    <dbReference type="NCBI Taxonomy" id="103690"/>
    <lineage>
        <taxon>Bacteria</taxon>
        <taxon>Bacillati</taxon>
        <taxon>Cyanobacteriota</taxon>
        <taxon>Cyanophyceae</taxon>
        <taxon>Nostocales</taxon>
        <taxon>Nostocaceae</taxon>
        <taxon>Nostoc</taxon>
    </lineage>
</organism>
<proteinExistence type="inferred from homology"/>
<dbReference type="EMBL" id="BA000019">
    <property type="protein sequence ID" value="BAB72893.1"/>
    <property type="molecule type" value="Genomic_DNA"/>
</dbReference>
<dbReference type="PIR" id="AE1923">
    <property type="entry name" value="AE1923"/>
</dbReference>
<dbReference type="SMR" id="Q8YYB4"/>
<dbReference type="STRING" id="103690.gene:10492949"/>
<dbReference type="KEGG" id="ana:all0936"/>
<dbReference type="eggNOG" id="COG0755">
    <property type="taxonomic scope" value="Bacteria"/>
</dbReference>
<dbReference type="OrthoDB" id="9814290at2"/>
<dbReference type="Proteomes" id="UP000002483">
    <property type="component" value="Chromosome"/>
</dbReference>
<dbReference type="GO" id="GO:0031676">
    <property type="term" value="C:plasma membrane-derived thylakoid membrane"/>
    <property type="evidence" value="ECO:0007669"/>
    <property type="project" value="UniProtKB-SubCell"/>
</dbReference>
<dbReference type="GO" id="GO:0020037">
    <property type="term" value="F:heme binding"/>
    <property type="evidence" value="ECO:0007669"/>
    <property type="project" value="InterPro"/>
</dbReference>
<dbReference type="GO" id="GO:0017004">
    <property type="term" value="P:cytochrome complex assembly"/>
    <property type="evidence" value="ECO:0007669"/>
    <property type="project" value="UniProtKB-UniRule"/>
</dbReference>
<dbReference type="HAMAP" id="MF_01391">
    <property type="entry name" value="CytC_CcsA"/>
    <property type="match status" value="1"/>
</dbReference>
<dbReference type="InterPro" id="IPR002541">
    <property type="entry name" value="Cyt_c_assembly"/>
</dbReference>
<dbReference type="InterPro" id="IPR017562">
    <property type="entry name" value="Cyt_c_biogenesis_CcsA"/>
</dbReference>
<dbReference type="InterPro" id="IPR045062">
    <property type="entry name" value="Cyt_c_biogenesis_CcsA/CcmC"/>
</dbReference>
<dbReference type="NCBIfam" id="TIGR03144">
    <property type="entry name" value="cytochr_II_ccsB"/>
    <property type="match status" value="1"/>
</dbReference>
<dbReference type="PANTHER" id="PTHR30071:SF1">
    <property type="entry name" value="CYTOCHROME B_B6 PROTEIN-RELATED"/>
    <property type="match status" value="1"/>
</dbReference>
<dbReference type="PANTHER" id="PTHR30071">
    <property type="entry name" value="HEME EXPORTER PROTEIN C"/>
    <property type="match status" value="1"/>
</dbReference>
<dbReference type="Pfam" id="PF01578">
    <property type="entry name" value="Cytochrom_C_asm"/>
    <property type="match status" value="1"/>
</dbReference>